<protein>
    <recommendedName>
        <fullName evidence="1">GTPase Der</fullName>
    </recommendedName>
    <alternativeName>
        <fullName evidence="1">GTP-binding protein EngA</fullName>
    </alternativeName>
</protein>
<sequence length="436" mass="49144">MAKPVVAIVGRPNVGKSTIFNRIVGERVSIVEDVPGVTRDRIYNSAEWLGKEFNIIDTGGIDLSDEPFLEQIRAQAEIAIDEADVIIFITNGREGVTDADEQVAKILYRSNKPIVLAINKVDNPEMRDQIYDFYSLGFGEPYPISGSHGLGLGDMLDAVRAHFPKEEEEEYPDDTVKFSLIGRPNVGKSSILNALLGEDRVIVSDIAGTTRDAIDTTYTFDGQDYVMIDTAGMRKRGKVYESTEKYSVLRAMRAIERSDVVLVVINAEEGIREQDKRIAGYAHDAGRAIIIVVNKWDAINKDEKTINVWTEDIREQFQFLSYAPIVFVSAKTKQRLNNLFPLINQVSDNHSLRVQSSMLNDVISDAVAMNPSPMDKGKRLKIFYTTQVAVKPPTFVVFVNDPELMHFSYERFLENRIREAFPFEGTPIRVIARKRK</sequence>
<keyword id="KW-0342">GTP-binding</keyword>
<keyword id="KW-0547">Nucleotide-binding</keyword>
<keyword id="KW-0677">Repeat</keyword>
<keyword id="KW-0690">Ribosome biogenesis</keyword>
<feature type="chain" id="PRO_1000124362" description="GTPase Der">
    <location>
        <begin position="1"/>
        <end position="436"/>
    </location>
</feature>
<feature type="domain" description="EngA-type G 1">
    <location>
        <begin position="4"/>
        <end position="167"/>
    </location>
</feature>
<feature type="domain" description="EngA-type G 2">
    <location>
        <begin position="176"/>
        <end position="351"/>
    </location>
</feature>
<feature type="domain" description="KH-like" evidence="1">
    <location>
        <begin position="352"/>
        <end position="436"/>
    </location>
</feature>
<feature type="binding site" evidence="1">
    <location>
        <begin position="10"/>
        <end position="17"/>
    </location>
    <ligand>
        <name>GTP</name>
        <dbReference type="ChEBI" id="CHEBI:37565"/>
        <label>1</label>
    </ligand>
</feature>
<feature type="binding site" evidence="1">
    <location>
        <begin position="57"/>
        <end position="61"/>
    </location>
    <ligand>
        <name>GTP</name>
        <dbReference type="ChEBI" id="CHEBI:37565"/>
        <label>1</label>
    </ligand>
</feature>
<feature type="binding site" evidence="1">
    <location>
        <begin position="119"/>
        <end position="122"/>
    </location>
    <ligand>
        <name>GTP</name>
        <dbReference type="ChEBI" id="CHEBI:37565"/>
        <label>1</label>
    </ligand>
</feature>
<feature type="binding site" evidence="1">
    <location>
        <begin position="182"/>
        <end position="189"/>
    </location>
    <ligand>
        <name>GTP</name>
        <dbReference type="ChEBI" id="CHEBI:37565"/>
        <label>2</label>
    </ligand>
</feature>
<feature type="binding site" evidence="1">
    <location>
        <begin position="229"/>
        <end position="233"/>
    </location>
    <ligand>
        <name>GTP</name>
        <dbReference type="ChEBI" id="CHEBI:37565"/>
        <label>2</label>
    </ligand>
</feature>
<feature type="binding site" evidence="1">
    <location>
        <begin position="294"/>
        <end position="297"/>
    </location>
    <ligand>
        <name>GTP</name>
        <dbReference type="ChEBI" id="CHEBI:37565"/>
        <label>2</label>
    </ligand>
</feature>
<reference key="1">
    <citation type="journal article" date="2011" name="J. Bacteriol.">
        <title>Genome sequence of lineage III Listeria monocytogenes strain HCC23.</title>
        <authorList>
            <person name="Steele C.L."/>
            <person name="Donaldson J.R."/>
            <person name="Paul D."/>
            <person name="Banes M.M."/>
            <person name="Arick T."/>
            <person name="Bridges S.M."/>
            <person name="Lawrence M.L."/>
        </authorList>
    </citation>
    <scope>NUCLEOTIDE SEQUENCE [LARGE SCALE GENOMIC DNA]</scope>
    <source>
        <strain>HCC23</strain>
    </source>
</reference>
<gene>
    <name evidence="1" type="primary">der</name>
    <name type="synonym">engA</name>
    <name type="ordered locus">LMHCC_0619</name>
</gene>
<organism>
    <name type="scientific">Listeria monocytogenes serotype 4a (strain HCC23)</name>
    <dbReference type="NCBI Taxonomy" id="552536"/>
    <lineage>
        <taxon>Bacteria</taxon>
        <taxon>Bacillati</taxon>
        <taxon>Bacillota</taxon>
        <taxon>Bacilli</taxon>
        <taxon>Bacillales</taxon>
        <taxon>Listeriaceae</taxon>
        <taxon>Listeria</taxon>
    </lineage>
</organism>
<accession>B8DBY9</accession>
<proteinExistence type="inferred from homology"/>
<comment type="function">
    <text evidence="1">GTPase that plays an essential role in the late steps of ribosome biogenesis.</text>
</comment>
<comment type="subunit">
    <text evidence="1">Associates with the 50S ribosomal subunit.</text>
</comment>
<comment type="similarity">
    <text evidence="1">Belongs to the TRAFAC class TrmE-Era-EngA-EngB-Septin-like GTPase superfamily. EngA (Der) GTPase family.</text>
</comment>
<name>DER_LISMH</name>
<dbReference type="EMBL" id="CP001175">
    <property type="protein sequence ID" value="ACK38975.1"/>
    <property type="molecule type" value="Genomic_DNA"/>
</dbReference>
<dbReference type="RefSeq" id="WP_003727996.1">
    <property type="nucleotide sequence ID" value="NC_011660.1"/>
</dbReference>
<dbReference type="SMR" id="B8DBY9"/>
<dbReference type="KEGG" id="lmh:LMHCC_0619"/>
<dbReference type="HOGENOM" id="CLU_016077_6_2_9"/>
<dbReference type="GO" id="GO:0005525">
    <property type="term" value="F:GTP binding"/>
    <property type="evidence" value="ECO:0007669"/>
    <property type="project" value="UniProtKB-UniRule"/>
</dbReference>
<dbReference type="GO" id="GO:0043022">
    <property type="term" value="F:ribosome binding"/>
    <property type="evidence" value="ECO:0007669"/>
    <property type="project" value="TreeGrafter"/>
</dbReference>
<dbReference type="GO" id="GO:0042254">
    <property type="term" value="P:ribosome biogenesis"/>
    <property type="evidence" value="ECO:0007669"/>
    <property type="project" value="UniProtKB-KW"/>
</dbReference>
<dbReference type="CDD" id="cd01894">
    <property type="entry name" value="EngA1"/>
    <property type="match status" value="1"/>
</dbReference>
<dbReference type="CDD" id="cd01895">
    <property type="entry name" value="EngA2"/>
    <property type="match status" value="1"/>
</dbReference>
<dbReference type="FunFam" id="3.30.300.20:FF:000004">
    <property type="entry name" value="GTPase Der"/>
    <property type="match status" value="1"/>
</dbReference>
<dbReference type="FunFam" id="3.40.50.300:FF:000040">
    <property type="entry name" value="GTPase Der"/>
    <property type="match status" value="1"/>
</dbReference>
<dbReference type="FunFam" id="3.40.50.300:FF:000057">
    <property type="entry name" value="GTPase Der"/>
    <property type="match status" value="1"/>
</dbReference>
<dbReference type="Gene3D" id="3.30.300.20">
    <property type="match status" value="1"/>
</dbReference>
<dbReference type="Gene3D" id="3.40.50.300">
    <property type="entry name" value="P-loop containing nucleotide triphosphate hydrolases"/>
    <property type="match status" value="2"/>
</dbReference>
<dbReference type="HAMAP" id="MF_00195">
    <property type="entry name" value="GTPase_Der"/>
    <property type="match status" value="1"/>
</dbReference>
<dbReference type="InterPro" id="IPR031166">
    <property type="entry name" value="G_ENGA"/>
</dbReference>
<dbReference type="InterPro" id="IPR006073">
    <property type="entry name" value="GTP-bd"/>
</dbReference>
<dbReference type="InterPro" id="IPR016484">
    <property type="entry name" value="GTPase_Der"/>
</dbReference>
<dbReference type="InterPro" id="IPR032859">
    <property type="entry name" value="KH_dom-like"/>
</dbReference>
<dbReference type="InterPro" id="IPR015946">
    <property type="entry name" value="KH_dom-like_a/b"/>
</dbReference>
<dbReference type="InterPro" id="IPR027417">
    <property type="entry name" value="P-loop_NTPase"/>
</dbReference>
<dbReference type="InterPro" id="IPR005225">
    <property type="entry name" value="Small_GTP-bd"/>
</dbReference>
<dbReference type="NCBIfam" id="TIGR03594">
    <property type="entry name" value="GTPase_EngA"/>
    <property type="match status" value="1"/>
</dbReference>
<dbReference type="NCBIfam" id="TIGR00231">
    <property type="entry name" value="small_GTP"/>
    <property type="match status" value="2"/>
</dbReference>
<dbReference type="PANTHER" id="PTHR43834">
    <property type="entry name" value="GTPASE DER"/>
    <property type="match status" value="1"/>
</dbReference>
<dbReference type="PANTHER" id="PTHR43834:SF6">
    <property type="entry name" value="GTPASE DER"/>
    <property type="match status" value="1"/>
</dbReference>
<dbReference type="Pfam" id="PF14714">
    <property type="entry name" value="KH_dom-like"/>
    <property type="match status" value="1"/>
</dbReference>
<dbReference type="Pfam" id="PF01926">
    <property type="entry name" value="MMR_HSR1"/>
    <property type="match status" value="2"/>
</dbReference>
<dbReference type="PIRSF" id="PIRSF006485">
    <property type="entry name" value="GTP-binding_EngA"/>
    <property type="match status" value="1"/>
</dbReference>
<dbReference type="PRINTS" id="PR00326">
    <property type="entry name" value="GTP1OBG"/>
</dbReference>
<dbReference type="SUPFAM" id="SSF52540">
    <property type="entry name" value="P-loop containing nucleoside triphosphate hydrolases"/>
    <property type="match status" value="2"/>
</dbReference>
<dbReference type="PROSITE" id="PS51712">
    <property type="entry name" value="G_ENGA"/>
    <property type="match status" value="2"/>
</dbReference>
<evidence type="ECO:0000255" key="1">
    <source>
        <dbReference type="HAMAP-Rule" id="MF_00195"/>
    </source>
</evidence>